<dbReference type="EMBL" id="ON505817">
    <property type="protein sequence ID" value="USH59576.1"/>
    <property type="molecule type" value="Genomic_DNA"/>
</dbReference>
<dbReference type="Gene3D" id="3.40.190.290">
    <property type="match status" value="1"/>
</dbReference>
<dbReference type="Gene3D" id="1.10.10.10">
    <property type="entry name" value="Winged helix-like DNA-binding domain superfamily/Winged helix DNA-binding domain"/>
    <property type="match status" value="1"/>
</dbReference>
<dbReference type="InterPro" id="IPR005119">
    <property type="entry name" value="LysR_subst-bd"/>
</dbReference>
<dbReference type="InterPro" id="IPR000847">
    <property type="entry name" value="Tscrpt_reg_HTH_LysR"/>
</dbReference>
<dbReference type="InterPro" id="IPR036388">
    <property type="entry name" value="WH-like_DNA-bd_sf"/>
</dbReference>
<dbReference type="InterPro" id="IPR036390">
    <property type="entry name" value="WH_DNA-bd_sf"/>
</dbReference>
<dbReference type="PANTHER" id="PTHR30427">
    <property type="entry name" value="TRANSCRIPTIONAL ACTIVATOR PROTEIN LYSR"/>
    <property type="match status" value="1"/>
</dbReference>
<dbReference type="PANTHER" id="PTHR30427:SF1">
    <property type="entry name" value="TRANSCRIPTIONAL ACTIVATOR PROTEIN LYSR"/>
    <property type="match status" value="1"/>
</dbReference>
<dbReference type="Pfam" id="PF00126">
    <property type="entry name" value="HTH_1"/>
    <property type="match status" value="1"/>
</dbReference>
<dbReference type="Pfam" id="PF03466">
    <property type="entry name" value="LysR_substrate"/>
    <property type="match status" value="1"/>
</dbReference>
<dbReference type="PRINTS" id="PR00039">
    <property type="entry name" value="HTHLYSR"/>
</dbReference>
<dbReference type="SUPFAM" id="SSF53850">
    <property type="entry name" value="Periplasmic binding protein-like II"/>
    <property type="match status" value="1"/>
</dbReference>
<dbReference type="SUPFAM" id="SSF46785">
    <property type="entry name" value="Winged helix' DNA-binding domain"/>
    <property type="match status" value="1"/>
</dbReference>
<dbReference type="PROSITE" id="PS50931">
    <property type="entry name" value="HTH_LYSR"/>
    <property type="match status" value="1"/>
</dbReference>
<feature type="chain" id="PRO_0000462127" description="HTH-type transcriptional regulator DgcR">
    <location>
        <begin position="1"/>
        <end position="291"/>
    </location>
</feature>
<feature type="domain" description="HTH lysR-type" evidence="1">
    <location>
        <begin position="1"/>
        <end position="58"/>
    </location>
</feature>
<feature type="DNA-binding region" description="H-T-H motif" evidence="1">
    <location>
        <begin position="18"/>
        <end position="37"/>
    </location>
</feature>
<evidence type="ECO:0000255" key="1">
    <source>
        <dbReference type="PROSITE-ProRule" id="PRU00253"/>
    </source>
</evidence>
<evidence type="ECO:0000269" key="2">
    <source>
    </source>
</evidence>
<evidence type="ECO:0000303" key="3">
    <source>
    </source>
</evidence>
<evidence type="ECO:0000305" key="4"/>
<accession>P0DXZ3</accession>
<sequence>MRLRHIEVFHAIYTTGSITNAAKALHVSQPSVSKVLSHAEMQLGFKLFERVKGRLIPTEEASMLFNEVDKIYQQMRSIKNTAENIKKAEFGNINLSVTPALGFDALPCAIAKYHHAYPKVNFNVQTIHNNEALQALLEHKCDLAVVFSPSAMPGVKAIKIAQSELVAVFPKRLFPSIPAQLTFQELEGAEFIDISDSGPLGHLLWKRMLEENIVLDSTIKVQTYFIAARLVAQGVGVCIVDKYTAMGNLSDDIAIASFSPPLFFNVSALHLENKVLSHVLDAFLNELSNCI</sequence>
<protein>
    <recommendedName>
        <fullName evidence="4">HTH-type transcriptional regulator DgcR</fullName>
    </recommendedName>
</protein>
<reference key="1">
    <citation type="journal article" date="2023" name="ISME J.">
        <title>Novel D-glutamate catabolic pathway in marine Proteobacteria and halophilic archaea.</title>
        <authorList>
            <person name="Yu Y."/>
            <person name="Wang P."/>
            <person name="Cao H.Y."/>
            <person name="Teng Z.J."/>
            <person name="Zhu Y."/>
            <person name="Wang M."/>
            <person name="McMinn A."/>
            <person name="Chen Y."/>
            <person name="Xiang H."/>
            <person name="Zhang Y.Z."/>
            <person name="Chen X.L."/>
            <person name="Zhang Y.Q."/>
        </authorList>
    </citation>
    <scope>NUCLEOTIDE SEQUENCE [GENOMIC DNA]</scope>
    <scope>FUNCTION</scope>
    <scope>INDUCTION</scope>
    <scope>DISRUPTION PHENOTYPE</scope>
    <source>
        <strain>CF6-2</strain>
    </source>
</reference>
<comment type="function">
    <text evidence="2">Transcriptional regulator that positively regulates the expression of the D-Glu gene cluster (DGC) (PubMed:36690779). The cluster includes dgcN and dgcA, which are involved in a deamination-independent D-glutamate degradation pathway, dgcR itself, dgcT, dgcP and dgcH (PubMed:36690779). Acts by binding the consensus sequence upstream of dgcR, dgcT, dgcP and dgcH (PubMed:36690779).</text>
</comment>
<comment type="induction">
    <text evidence="2">Expression is up-regulated in the presence of D-glutamate.</text>
</comment>
<comment type="disruption phenotype">
    <text evidence="2">The growth of the deletion mutant is significantly reduced with D-glutamate as the sole nitrogen source.</text>
</comment>
<comment type="similarity">
    <text evidence="4">Belongs to the LysR transcriptional regulatory family.</text>
</comment>
<proteinExistence type="evidence at transcript level"/>
<name>DGCR_PSEAS</name>
<keyword id="KW-0010">Activator</keyword>
<keyword id="KW-0238">DNA-binding</keyword>
<keyword id="KW-0804">Transcription</keyword>
<keyword id="KW-0805">Transcription regulation</keyword>
<organism>
    <name type="scientific">Pseudoalteromonas sp</name>
    <dbReference type="NCBI Taxonomy" id="53249"/>
    <lineage>
        <taxon>Bacteria</taxon>
        <taxon>Pseudomonadati</taxon>
        <taxon>Pseudomonadota</taxon>
        <taxon>Gammaproteobacteria</taxon>
        <taxon>Alteromonadales</taxon>
        <taxon>Pseudoalteromonadaceae</taxon>
        <taxon>Pseudoalteromonas</taxon>
    </lineage>
</organism>
<gene>
    <name evidence="3" type="primary">dgcR</name>
</gene>